<accession>A4GGE7</accession>
<accession>A8W847</accession>
<name>PSAC_PHAVU</name>
<keyword id="KW-0004">4Fe-4S</keyword>
<keyword id="KW-0150">Chloroplast</keyword>
<keyword id="KW-0249">Electron transport</keyword>
<keyword id="KW-0408">Iron</keyword>
<keyword id="KW-0411">Iron-sulfur</keyword>
<keyword id="KW-0472">Membrane</keyword>
<keyword id="KW-0479">Metal-binding</keyword>
<keyword id="KW-0560">Oxidoreductase</keyword>
<keyword id="KW-0602">Photosynthesis</keyword>
<keyword id="KW-0603">Photosystem I</keyword>
<keyword id="KW-0934">Plastid</keyword>
<keyword id="KW-0677">Repeat</keyword>
<keyword id="KW-0793">Thylakoid</keyword>
<keyword id="KW-0813">Transport</keyword>
<dbReference type="EC" id="1.97.1.12" evidence="2"/>
<dbReference type="EMBL" id="DQ886273">
    <property type="protein sequence ID" value="ABH88129.1"/>
    <property type="molecule type" value="Genomic_DNA"/>
</dbReference>
<dbReference type="EMBL" id="EU196765">
    <property type="protein sequence ID" value="ABW22817.1"/>
    <property type="molecule type" value="Genomic_DNA"/>
</dbReference>
<dbReference type="RefSeq" id="YP_001122848.1">
    <property type="nucleotide sequence ID" value="NC_009259.1"/>
</dbReference>
<dbReference type="SMR" id="A4GGE7"/>
<dbReference type="GeneID" id="4961813"/>
<dbReference type="KEGG" id="pvu:4961813"/>
<dbReference type="GO" id="GO:0009535">
    <property type="term" value="C:chloroplast thylakoid membrane"/>
    <property type="evidence" value="ECO:0007669"/>
    <property type="project" value="UniProtKB-SubCell"/>
</dbReference>
<dbReference type="GO" id="GO:0009522">
    <property type="term" value="C:photosystem I"/>
    <property type="evidence" value="ECO:0007669"/>
    <property type="project" value="UniProtKB-KW"/>
</dbReference>
<dbReference type="GO" id="GO:0051539">
    <property type="term" value="F:4 iron, 4 sulfur cluster binding"/>
    <property type="evidence" value="ECO:0007669"/>
    <property type="project" value="UniProtKB-KW"/>
</dbReference>
<dbReference type="GO" id="GO:0009055">
    <property type="term" value="F:electron transfer activity"/>
    <property type="evidence" value="ECO:0007669"/>
    <property type="project" value="UniProtKB-UniRule"/>
</dbReference>
<dbReference type="GO" id="GO:0046872">
    <property type="term" value="F:metal ion binding"/>
    <property type="evidence" value="ECO:0007669"/>
    <property type="project" value="UniProtKB-KW"/>
</dbReference>
<dbReference type="GO" id="GO:0016491">
    <property type="term" value="F:oxidoreductase activity"/>
    <property type="evidence" value="ECO:0007669"/>
    <property type="project" value="UniProtKB-KW"/>
</dbReference>
<dbReference type="GO" id="GO:0009773">
    <property type="term" value="P:photosynthetic electron transport in photosystem I"/>
    <property type="evidence" value="ECO:0007669"/>
    <property type="project" value="InterPro"/>
</dbReference>
<dbReference type="FunFam" id="3.30.70.20:FF:000001">
    <property type="entry name" value="Photosystem I iron-sulfur center"/>
    <property type="match status" value="1"/>
</dbReference>
<dbReference type="Gene3D" id="3.30.70.20">
    <property type="match status" value="1"/>
</dbReference>
<dbReference type="HAMAP" id="MF_01303">
    <property type="entry name" value="PSI_PsaC"/>
    <property type="match status" value="1"/>
</dbReference>
<dbReference type="InterPro" id="IPR017896">
    <property type="entry name" value="4Fe4S_Fe-S-bd"/>
</dbReference>
<dbReference type="InterPro" id="IPR017900">
    <property type="entry name" value="4Fe4S_Fe_S_CS"/>
</dbReference>
<dbReference type="InterPro" id="IPR050157">
    <property type="entry name" value="PSI_iron-sulfur_center"/>
</dbReference>
<dbReference type="InterPro" id="IPR017491">
    <property type="entry name" value="PSI_PsaC"/>
</dbReference>
<dbReference type="NCBIfam" id="TIGR03048">
    <property type="entry name" value="PS_I_psaC"/>
    <property type="match status" value="1"/>
</dbReference>
<dbReference type="PANTHER" id="PTHR24960:SF79">
    <property type="entry name" value="PHOTOSYSTEM I IRON-SULFUR CENTER"/>
    <property type="match status" value="1"/>
</dbReference>
<dbReference type="PANTHER" id="PTHR24960">
    <property type="entry name" value="PHOTOSYSTEM I IRON-SULFUR CENTER-RELATED"/>
    <property type="match status" value="1"/>
</dbReference>
<dbReference type="Pfam" id="PF14697">
    <property type="entry name" value="Fer4_21"/>
    <property type="match status" value="1"/>
</dbReference>
<dbReference type="SUPFAM" id="SSF54862">
    <property type="entry name" value="4Fe-4S ferredoxins"/>
    <property type="match status" value="1"/>
</dbReference>
<dbReference type="PROSITE" id="PS00198">
    <property type="entry name" value="4FE4S_FER_1"/>
    <property type="match status" value="2"/>
</dbReference>
<dbReference type="PROSITE" id="PS51379">
    <property type="entry name" value="4FE4S_FER_2"/>
    <property type="match status" value="2"/>
</dbReference>
<reference key="1">
    <citation type="journal article" date="2007" name="BMC Genomics">
        <title>Rapid evolutionary change of common bean (Phaseolus vulgaris L) plastome, and the genomic diversification of legume chloroplasts.</title>
        <authorList>
            <person name="Guo X."/>
            <person name="Castillo-Ramirez S."/>
            <person name="Gonzalez V."/>
            <person name="Bustos P."/>
            <person name="Fernandez-Vazquez J.L."/>
            <person name="Santamaria R.I."/>
            <person name="Arellano J."/>
            <person name="Cevallos M.A."/>
            <person name="Davila G."/>
        </authorList>
    </citation>
    <scope>NUCLEOTIDE SEQUENCE [LARGE SCALE GENOMIC DNA]</scope>
    <source>
        <strain>cv. Negro Jamapa</strain>
    </source>
</reference>
<reference key="2">
    <citation type="submission" date="2007-10" db="EMBL/GenBank/DDBJ databases">
        <title>Complete nucleotide sequence of the plastid genome of the common bean, Phaseolus vulgaris.</title>
        <authorList>
            <person name="Moore M.J."/>
            <person name="Triplett E.W."/>
            <person name="Broughton W.J."/>
            <person name="Soltis P.S."/>
            <person name="Soltis D.E."/>
        </authorList>
    </citation>
    <scope>NUCLEOTIDE SEQUENCE [LARGE SCALE GENOMIC DNA]</scope>
</reference>
<organism>
    <name type="scientific">Phaseolus vulgaris</name>
    <name type="common">Kidney bean</name>
    <name type="synonym">French bean</name>
    <dbReference type="NCBI Taxonomy" id="3885"/>
    <lineage>
        <taxon>Eukaryota</taxon>
        <taxon>Viridiplantae</taxon>
        <taxon>Streptophyta</taxon>
        <taxon>Embryophyta</taxon>
        <taxon>Tracheophyta</taxon>
        <taxon>Spermatophyta</taxon>
        <taxon>Magnoliopsida</taxon>
        <taxon>eudicotyledons</taxon>
        <taxon>Gunneridae</taxon>
        <taxon>Pentapetalae</taxon>
        <taxon>rosids</taxon>
        <taxon>fabids</taxon>
        <taxon>Fabales</taxon>
        <taxon>Fabaceae</taxon>
        <taxon>Papilionoideae</taxon>
        <taxon>50 kb inversion clade</taxon>
        <taxon>NPAAA clade</taxon>
        <taxon>indigoferoid/millettioid clade</taxon>
        <taxon>Phaseoleae</taxon>
        <taxon>Phaseolus</taxon>
    </lineage>
</organism>
<comment type="function">
    <text evidence="2">Apoprotein for the two 4Fe-4S centers FA and FB of photosystem I (PSI); essential for photochemical activity. FB is the terminal electron acceptor of PSI, donating electrons to ferredoxin. The C-terminus interacts with PsaA/B/D and helps assemble the protein into the PSI complex. Required for binding of PsaD and PsaE to PSI. PSI is a plastocyanin-ferredoxin oxidoreductase, converting photonic excitation into a charge separation, which transfers an electron from the donor P700 chlorophyll pair to the spectroscopically characterized acceptors A0, A1, FX, FA and FB in turn.</text>
</comment>
<comment type="catalytic activity">
    <reaction evidence="2">
        <text>reduced [plastocyanin] + hnu + oxidized [2Fe-2S]-[ferredoxin] = oxidized [plastocyanin] + reduced [2Fe-2S]-[ferredoxin]</text>
        <dbReference type="Rhea" id="RHEA:30407"/>
        <dbReference type="Rhea" id="RHEA-COMP:10000"/>
        <dbReference type="Rhea" id="RHEA-COMP:10001"/>
        <dbReference type="Rhea" id="RHEA-COMP:10039"/>
        <dbReference type="Rhea" id="RHEA-COMP:10040"/>
        <dbReference type="ChEBI" id="CHEBI:29036"/>
        <dbReference type="ChEBI" id="CHEBI:30212"/>
        <dbReference type="ChEBI" id="CHEBI:33737"/>
        <dbReference type="ChEBI" id="CHEBI:33738"/>
        <dbReference type="ChEBI" id="CHEBI:49552"/>
        <dbReference type="EC" id="1.97.1.12"/>
    </reaction>
</comment>
<comment type="cofactor">
    <cofactor evidence="2">
        <name>[4Fe-4S] cluster</name>
        <dbReference type="ChEBI" id="CHEBI:49883"/>
    </cofactor>
    <text evidence="2">Binds 2 [4Fe-4S] clusters. Cluster 2 is most probably the spectroscopically characterized electron acceptor FA and cluster 1 is most probably FB.</text>
</comment>
<comment type="subunit">
    <text evidence="2">The eukaryotic PSI reaction center is composed of at least 11 subunits.</text>
</comment>
<comment type="subcellular location">
    <subcellularLocation>
        <location evidence="2">Plastid</location>
        <location evidence="2">Chloroplast thylakoid membrane</location>
        <topology evidence="2">Peripheral membrane protein</topology>
        <orientation evidence="2">Stromal side</orientation>
    </subcellularLocation>
</comment>
<sequence length="81" mass="8980">MSHSVKIYDTCIGCTQCVRACPTDVLEMIPWGGCKAKQIASAPRTEDCVGCKRCESACPTDFLSVRVYLWHETTRSMGLAY</sequence>
<evidence type="ECO:0000250" key="1"/>
<evidence type="ECO:0000255" key="2">
    <source>
        <dbReference type="HAMAP-Rule" id="MF_01303"/>
    </source>
</evidence>
<protein>
    <recommendedName>
        <fullName evidence="2">Photosystem I iron-sulfur center</fullName>
        <ecNumber evidence="2">1.97.1.12</ecNumber>
    </recommendedName>
    <alternativeName>
        <fullName evidence="2">9 kDa polypeptide</fullName>
    </alternativeName>
    <alternativeName>
        <fullName evidence="2">PSI-C</fullName>
    </alternativeName>
    <alternativeName>
        <fullName evidence="2">Photosystem I subunit VII</fullName>
    </alternativeName>
    <alternativeName>
        <fullName evidence="2">PsaC</fullName>
    </alternativeName>
</protein>
<proteinExistence type="inferred from homology"/>
<gene>
    <name evidence="2" type="primary">psaC</name>
</gene>
<geneLocation type="chloroplast"/>
<feature type="initiator methionine" description="Removed" evidence="1">
    <location>
        <position position="1"/>
    </location>
</feature>
<feature type="chain" id="PRO_0000292126" description="Photosystem I iron-sulfur center">
    <location>
        <begin position="2"/>
        <end position="81"/>
    </location>
</feature>
<feature type="domain" description="4Fe-4S ferredoxin-type 1" evidence="2">
    <location>
        <begin position="2"/>
        <end position="31"/>
    </location>
</feature>
<feature type="domain" description="4Fe-4S ferredoxin-type 2" evidence="2">
    <location>
        <begin position="39"/>
        <end position="68"/>
    </location>
</feature>
<feature type="binding site" evidence="2">
    <location>
        <position position="11"/>
    </location>
    <ligand>
        <name>[4Fe-4S] cluster</name>
        <dbReference type="ChEBI" id="CHEBI:49883"/>
        <label>1</label>
    </ligand>
</feature>
<feature type="binding site" evidence="2">
    <location>
        <position position="14"/>
    </location>
    <ligand>
        <name>[4Fe-4S] cluster</name>
        <dbReference type="ChEBI" id="CHEBI:49883"/>
        <label>1</label>
    </ligand>
</feature>
<feature type="binding site" evidence="2">
    <location>
        <position position="17"/>
    </location>
    <ligand>
        <name>[4Fe-4S] cluster</name>
        <dbReference type="ChEBI" id="CHEBI:49883"/>
        <label>1</label>
    </ligand>
</feature>
<feature type="binding site" evidence="2">
    <location>
        <position position="21"/>
    </location>
    <ligand>
        <name>[4Fe-4S] cluster</name>
        <dbReference type="ChEBI" id="CHEBI:49883"/>
        <label>2</label>
    </ligand>
</feature>
<feature type="binding site" evidence="2">
    <location>
        <position position="48"/>
    </location>
    <ligand>
        <name>[4Fe-4S] cluster</name>
        <dbReference type="ChEBI" id="CHEBI:49883"/>
        <label>2</label>
    </ligand>
</feature>
<feature type="binding site" evidence="2">
    <location>
        <position position="51"/>
    </location>
    <ligand>
        <name>[4Fe-4S] cluster</name>
        <dbReference type="ChEBI" id="CHEBI:49883"/>
        <label>2</label>
    </ligand>
</feature>
<feature type="binding site" evidence="2">
    <location>
        <position position="54"/>
    </location>
    <ligand>
        <name>[4Fe-4S] cluster</name>
        <dbReference type="ChEBI" id="CHEBI:49883"/>
        <label>2</label>
    </ligand>
</feature>
<feature type="binding site" evidence="2">
    <location>
        <position position="58"/>
    </location>
    <ligand>
        <name>[4Fe-4S] cluster</name>
        <dbReference type="ChEBI" id="CHEBI:49883"/>
        <label>1</label>
    </ligand>
</feature>